<sequence length="225" mass="24795">MTKFSLHKEGLLTIGFTLACTAVAFFFVPALGLCGICVAALVTYFFRDPQRAIAISKDFVLSPADGLICKIENALPPQSSELVEEMQKISVYLSPLNVHVNRIPVDGIVRKLHYVPGKNLRADYDSSEDENERQESTIEMADGRNVVVVQQTGFLARRVVCDLRKDQQVSAGKRFGIIKFGSRVTVYIPKDMPLLVSEGQTVVAGETILALLSETASLVTERFLD</sequence>
<dbReference type="EC" id="4.1.1.65" evidence="1"/>
<dbReference type="EMBL" id="CP000237">
    <property type="protein sequence ID" value="ABD46210.1"/>
    <property type="molecule type" value="Genomic_DNA"/>
</dbReference>
<dbReference type="RefSeq" id="WP_011451648.1">
    <property type="nucleotide sequence ID" value="NC_007798.1"/>
</dbReference>
<dbReference type="SMR" id="Q2GEF4"/>
<dbReference type="STRING" id="222891.NSE_0248"/>
<dbReference type="KEGG" id="nse:NSE_0248"/>
<dbReference type="eggNOG" id="COG0688">
    <property type="taxonomic scope" value="Bacteria"/>
</dbReference>
<dbReference type="HOGENOM" id="CLU_072492_0_0_5"/>
<dbReference type="OrthoDB" id="9790893at2"/>
<dbReference type="UniPathway" id="UPA00558">
    <property type="reaction ID" value="UER00616"/>
</dbReference>
<dbReference type="Proteomes" id="UP000001942">
    <property type="component" value="Chromosome"/>
</dbReference>
<dbReference type="GO" id="GO:0005886">
    <property type="term" value="C:plasma membrane"/>
    <property type="evidence" value="ECO:0007669"/>
    <property type="project" value="UniProtKB-SubCell"/>
</dbReference>
<dbReference type="GO" id="GO:0004609">
    <property type="term" value="F:phosphatidylserine decarboxylase activity"/>
    <property type="evidence" value="ECO:0007669"/>
    <property type="project" value="UniProtKB-UniRule"/>
</dbReference>
<dbReference type="GO" id="GO:0006646">
    <property type="term" value="P:phosphatidylethanolamine biosynthetic process"/>
    <property type="evidence" value="ECO:0007669"/>
    <property type="project" value="UniProtKB-UniRule"/>
</dbReference>
<dbReference type="HAMAP" id="MF_00664">
    <property type="entry name" value="PS_decarb_PSD_A"/>
    <property type="match status" value="1"/>
</dbReference>
<dbReference type="InterPro" id="IPR003817">
    <property type="entry name" value="PS_Dcarbxylase"/>
</dbReference>
<dbReference type="InterPro" id="IPR033175">
    <property type="entry name" value="PSD-A"/>
</dbReference>
<dbReference type="PANTHER" id="PTHR35809">
    <property type="entry name" value="ARCHAETIDYLSERINE DECARBOXYLASE PROENZYME-RELATED"/>
    <property type="match status" value="1"/>
</dbReference>
<dbReference type="PANTHER" id="PTHR35809:SF1">
    <property type="entry name" value="ARCHAETIDYLSERINE DECARBOXYLASE PROENZYME-RELATED"/>
    <property type="match status" value="1"/>
</dbReference>
<dbReference type="Pfam" id="PF02666">
    <property type="entry name" value="PS_Dcarbxylase"/>
    <property type="match status" value="1"/>
</dbReference>
<comment type="function">
    <text evidence="1">Catalyzes the formation of phosphatidylethanolamine (PtdEtn) from phosphatidylserine (PtdSer).</text>
</comment>
<comment type="catalytic activity">
    <reaction evidence="1">
        <text>a 1,2-diacyl-sn-glycero-3-phospho-L-serine + H(+) = a 1,2-diacyl-sn-glycero-3-phosphoethanolamine + CO2</text>
        <dbReference type="Rhea" id="RHEA:20828"/>
        <dbReference type="ChEBI" id="CHEBI:15378"/>
        <dbReference type="ChEBI" id="CHEBI:16526"/>
        <dbReference type="ChEBI" id="CHEBI:57262"/>
        <dbReference type="ChEBI" id="CHEBI:64612"/>
        <dbReference type="EC" id="4.1.1.65"/>
    </reaction>
</comment>
<comment type="cofactor">
    <cofactor evidence="1">
        <name>pyruvate</name>
        <dbReference type="ChEBI" id="CHEBI:15361"/>
    </cofactor>
    <text evidence="1">Binds 1 pyruvoyl group covalently per subunit.</text>
</comment>
<comment type="pathway">
    <text evidence="1">Phospholipid metabolism; phosphatidylethanolamine biosynthesis; phosphatidylethanolamine from CDP-diacylglycerol: step 2/2.</text>
</comment>
<comment type="subunit">
    <text evidence="1">Heterodimer of a large membrane-associated beta subunit and a small pyruvoyl-containing alpha subunit.</text>
</comment>
<comment type="subcellular location">
    <subcellularLocation>
        <location evidence="1">Cell membrane</location>
        <topology evidence="1">Peripheral membrane protein</topology>
    </subcellularLocation>
</comment>
<comment type="PTM">
    <text evidence="1">Is synthesized initially as an inactive proenzyme. Formation of the active enzyme involves a self-maturation process in which the active site pyruvoyl group is generated from an internal serine residue via an autocatalytic post-translational modification. Two non-identical subunits are generated from the proenzyme in this reaction, and the pyruvate is formed at the N-terminus of the alpha chain, which is derived from the carboxyl end of the proenzyme. The post-translation cleavage follows an unusual pathway, termed non-hydrolytic serinolysis, in which the side chain hydroxyl group of the serine supplies its oxygen atom to form the C-terminus of the beta chain, while the remainder of the serine residue undergoes an oxidative deamination to produce ammonia and the pyruvoyl prosthetic group on the alpha chain.</text>
</comment>
<comment type="similarity">
    <text evidence="1">Belongs to the phosphatidylserine decarboxylase family. PSD-A subfamily.</text>
</comment>
<proteinExistence type="inferred from homology"/>
<evidence type="ECO:0000255" key="1">
    <source>
        <dbReference type="HAMAP-Rule" id="MF_00664"/>
    </source>
</evidence>
<gene>
    <name evidence="1" type="primary">psd</name>
    <name type="ordered locus">NSE_0248</name>
</gene>
<organism>
    <name type="scientific">Neorickettsia sennetsu (strain ATCC VR-367 / Miyayama)</name>
    <name type="common">Ehrlichia sennetsu</name>
    <dbReference type="NCBI Taxonomy" id="222891"/>
    <lineage>
        <taxon>Bacteria</taxon>
        <taxon>Pseudomonadati</taxon>
        <taxon>Pseudomonadota</taxon>
        <taxon>Alphaproteobacteria</taxon>
        <taxon>Rickettsiales</taxon>
        <taxon>Anaplasmataceae</taxon>
        <taxon>Neorickettsia</taxon>
    </lineage>
</organism>
<accession>Q2GEF4</accession>
<name>PSD_NEOSM</name>
<feature type="chain" id="PRO_0000262231" description="Phosphatidylserine decarboxylase beta chain" evidence="1">
    <location>
        <begin position="1"/>
        <end position="181"/>
    </location>
</feature>
<feature type="chain" id="PRO_0000262232" description="Phosphatidylserine decarboxylase alpha chain" evidence="1">
    <location>
        <begin position="182"/>
        <end position="225"/>
    </location>
</feature>
<feature type="active site" description="Schiff-base intermediate with substrate; via pyruvic acid" evidence="1">
    <location>
        <position position="182"/>
    </location>
</feature>
<feature type="site" description="Cleavage (non-hydrolytic); by autocatalysis" evidence="1">
    <location>
        <begin position="181"/>
        <end position="182"/>
    </location>
</feature>
<feature type="modified residue" description="Pyruvic acid (Ser); by autocatalysis" evidence="1">
    <location>
        <position position="182"/>
    </location>
</feature>
<reference key="1">
    <citation type="journal article" date="2006" name="PLoS Genet.">
        <title>Comparative genomics of emerging human ehrlichiosis agents.</title>
        <authorList>
            <person name="Dunning Hotopp J.C."/>
            <person name="Lin M."/>
            <person name="Madupu R."/>
            <person name="Crabtree J."/>
            <person name="Angiuoli S.V."/>
            <person name="Eisen J.A."/>
            <person name="Seshadri R."/>
            <person name="Ren Q."/>
            <person name="Wu M."/>
            <person name="Utterback T.R."/>
            <person name="Smith S."/>
            <person name="Lewis M."/>
            <person name="Khouri H."/>
            <person name="Zhang C."/>
            <person name="Niu H."/>
            <person name="Lin Q."/>
            <person name="Ohashi N."/>
            <person name="Zhi N."/>
            <person name="Nelson W.C."/>
            <person name="Brinkac L.M."/>
            <person name="Dodson R.J."/>
            <person name="Rosovitz M.J."/>
            <person name="Sundaram J.P."/>
            <person name="Daugherty S.C."/>
            <person name="Davidsen T."/>
            <person name="Durkin A.S."/>
            <person name="Gwinn M.L."/>
            <person name="Haft D.H."/>
            <person name="Selengut J.D."/>
            <person name="Sullivan S.A."/>
            <person name="Zafar N."/>
            <person name="Zhou L."/>
            <person name="Benahmed F."/>
            <person name="Forberger H."/>
            <person name="Halpin R."/>
            <person name="Mulligan S."/>
            <person name="Robinson J."/>
            <person name="White O."/>
            <person name="Rikihisa Y."/>
            <person name="Tettelin H."/>
        </authorList>
    </citation>
    <scope>NUCLEOTIDE SEQUENCE [LARGE SCALE GENOMIC DNA]</scope>
    <source>
        <strain>ATCC VR-367 / Miyayama</strain>
    </source>
</reference>
<keyword id="KW-1003">Cell membrane</keyword>
<keyword id="KW-0210">Decarboxylase</keyword>
<keyword id="KW-0444">Lipid biosynthesis</keyword>
<keyword id="KW-0443">Lipid metabolism</keyword>
<keyword id="KW-0456">Lyase</keyword>
<keyword id="KW-0472">Membrane</keyword>
<keyword id="KW-0594">Phospholipid biosynthesis</keyword>
<keyword id="KW-1208">Phospholipid metabolism</keyword>
<keyword id="KW-0670">Pyruvate</keyword>
<keyword id="KW-0865">Zymogen</keyword>
<protein>
    <recommendedName>
        <fullName evidence="1">Phosphatidylserine decarboxylase proenzyme</fullName>
        <ecNumber evidence="1">4.1.1.65</ecNumber>
    </recommendedName>
    <component>
        <recommendedName>
            <fullName evidence="1">Phosphatidylserine decarboxylase alpha chain</fullName>
        </recommendedName>
    </component>
    <component>
        <recommendedName>
            <fullName evidence="1">Phosphatidylserine decarboxylase beta chain</fullName>
        </recommendedName>
    </component>
</protein>